<protein>
    <recommendedName>
        <fullName>Uncharacterized protein YphB</fullName>
    </recommendedName>
</protein>
<keyword id="KW-0002">3D-structure</keyword>
<keyword id="KW-1185">Reference proteome</keyword>
<feature type="chain" id="PRO_0000169259" description="Uncharacterized protein YphB">
    <location>
        <begin position="1"/>
        <end position="290"/>
    </location>
</feature>
<feature type="strand" evidence="1">
    <location>
        <begin position="3"/>
        <end position="8"/>
    </location>
</feature>
<feature type="strand" evidence="1">
    <location>
        <begin position="11"/>
        <end position="16"/>
    </location>
</feature>
<feature type="strand" evidence="1">
    <location>
        <begin position="21"/>
        <end position="27"/>
    </location>
</feature>
<feature type="strand" evidence="1">
    <location>
        <begin position="30"/>
        <end position="33"/>
    </location>
</feature>
<feature type="helix" evidence="1">
    <location>
        <begin position="42"/>
        <end position="44"/>
    </location>
</feature>
<feature type="strand" evidence="1">
    <location>
        <begin position="45"/>
        <end position="52"/>
    </location>
</feature>
<feature type="helix" evidence="1">
    <location>
        <begin position="58"/>
        <end position="60"/>
    </location>
</feature>
<feature type="strand" evidence="1">
    <location>
        <begin position="61"/>
        <end position="64"/>
    </location>
</feature>
<feature type="strand" evidence="1">
    <location>
        <begin position="67"/>
        <end position="70"/>
    </location>
</feature>
<feature type="strand" evidence="1">
    <location>
        <begin position="82"/>
        <end position="85"/>
    </location>
</feature>
<feature type="helix" evidence="1">
    <location>
        <begin position="86"/>
        <end position="88"/>
    </location>
</feature>
<feature type="strand" evidence="1">
    <location>
        <begin position="92"/>
        <end position="96"/>
    </location>
</feature>
<feature type="strand" evidence="1">
    <location>
        <begin position="98"/>
        <end position="111"/>
    </location>
</feature>
<feature type="strand" evidence="1">
    <location>
        <begin position="113"/>
        <end position="122"/>
    </location>
</feature>
<feature type="strand" evidence="1">
    <location>
        <begin position="124"/>
        <end position="135"/>
    </location>
</feature>
<feature type="strand" evidence="1">
    <location>
        <begin position="137"/>
        <end position="139"/>
    </location>
</feature>
<feature type="strand" evidence="1">
    <location>
        <begin position="141"/>
        <end position="143"/>
    </location>
</feature>
<feature type="strand" evidence="1">
    <location>
        <begin position="146"/>
        <end position="152"/>
    </location>
</feature>
<feature type="strand" evidence="1">
    <location>
        <begin position="158"/>
        <end position="161"/>
    </location>
</feature>
<feature type="strand" evidence="1">
    <location>
        <begin position="164"/>
        <end position="169"/>
    </location>
</feature>
<feature type="helix" evidence="1">
    <location>
        <begin position="171"/>
        <end position="173"/>
    </location>
</feature>
<feature type="strand" evidence="1">
    <location>
        <begin position="175"/>
        <end position="181"/>
    </location>
</feature>
<feature type="helix" evidence="1">
    <location>
        <begin position="184"/>
        <end position="186"/>
    </location>
</feature>
<feature type="strand" evidence="1">
    <location>
        <begin position="199"/>
        <end position="205"/>
    </location>
</feature>
<feature type="strand" evidence="1">
    <location>
        <begin position="208"/>
        <end position="214"/>
    </location>
</feature>
<feature type="helix" evidence="1">
    <location>
        <begin position="215"/>
        <end position="217"/>
    </location>
</feature>
<feature type="strand" evidence="1">
    <location>
        <begin position="219"/>
        <end position="227"/>
    </location>
</feature>
<feature type="strand" evidence="1">
    <location>
        <begin position="230"/>
        <end position="236"/>
    </location>
</feature>
<feature type="turn" evidence="1">
    <location>
        <begin position="239"/>
        <end position="241"/>
    </location>
</feature>
<feature type="strand" evidence="1">
    <location>
        <begin position="249"/>
        <end position="257"/>
    </location>
</feature>
<feature type="helix" evidence="1">
    <location>
        <begin position="261"/>
        <end position="263"/>
    </location>
</feature>
<feature type="helix" evidence="1">
    <location>
        <begin position="265"/>
        <end position="267"/>
    </location>
</feature>
<feature type="strand" evidence="1">
    <location>
        <begin position="271"/>
        <end position="273"/>
    </location>
</feature>
<feature type="strand" evidence="1">
    <location>
        <begin position="278"/>
        <end position="289"/>
    </location>
</feature>
<proteinExistence type="evidence at protein level"/>
<gene>
    <name type="primary">yphB</name>
    <name type="ordered locus">b2544</name>
    <name type="ordered locus">JW2528</name>
</gene>
<reference key="1">
    <citation type="journal article" date="1997" name="Science">
        <title>The complete genome sequence of Escherichia coli K-12.</title>
        <authorList>
            <person name="Blattner F.R."/>
            <person name="Plunkett G. III"/>
            <person name="Bloch C.A."/>
            <person name="Perna N.T."/>
            <person name="Burland V."/>
            <person name="Riley M."/>
            <person name="Collado-Vides J."/>
            <person name="Glasner J.D."/>
            <person name="Rode C.K."/>
            <person name="Mayhew G.F."/>
            <person name="Gregor J."/>
            <person name="Davis N.W."/>
            <person name="Kirkpatrick H.A."/>
            <person name="Goeden M.A."/>
            <person name="Rose D.J."/>
            <person name="Mau B."/>
            <person name="Shao Y."/>
        </authorList>
    </citation>
    <scope>NUCLEOTIDE SEQUENCE [LARGE SCALE GENOMIC DNA]</scope>
    <source>
        <strain>K12 / MG1655 / ATCC 47076</strain>
    </source>
</reference>
<reference key="2">
    <citation type="journal article" date="2006" name="Mol. Syst. Biol.">
        <title>Highly accurate genome sequences of Escherichia coli K-12 strains MG1655 and W3110.</title>
        <authorList>
            <person name="Hayashi K."/>
            <person name="Morooka N."/>
            <person name="Yamamoto Y."/>
            <person name="Fujita K."/>
            <person name="Isono K."/>
            <person name="Choi S."/>
            <person name="Ohtsubo E."/>
            <person name="Baba T."/>
            <person name="Wanner B.L."/>
            <person name="Mori H."/>
            <person name="Horiuchi T."/>
        </authorList>
    </citation>
    <scope>NUCLEOTIDE SEQUENCE [LARGE SCALE GENOMIC DNA]</scope>
    <source>
        <strain>K12 / W3110 / ATCC 27325 / DSM 5911</strain>
    </source>
</reference>
<organism>
    <name type="scientific">Escherichia coli (strain K12)</name>
    <dbReference type="NCBI Taxonomy" id="83333"/>
    <lineage>
        <taxon>Bacteria</taxon>
        <taxon>Pseudomonadati</taxon>
        <taxon>Pseudomonadota</taxon>
        <taxon>Gammaproteobacteria</taxon>
        <taxon>Enterobacterales</taxon>
        <taxon>Enterobacteriaceae</taxon>
        <taxon>Escherichia</taxon>
    </lineage>
</organism>
<evidence type="ECO:0007829" key="1">
    <source>
        <dbReference type="PDB" id="3NRE"/>
    </source>
</evidence>
<accession>P76584</accession>
<accession>Q2MAH6</accession>
<dbReference type="EMBL" id="U00096">
    <property type="protein sequence ID" value="AAC75597.1"/>
    <property type="molecule type" value="Genomic_DNA"/>
</dbReference>
<dbReference type="EMBL" id="AP009048">
    <property type="protein sequence ID" value="BAE76730.1"/>
    <property type="molecule type" value="Genomic_DNA"/>
</dbReference>
<dbReference type="PIR" id="G65031">
    <property type="entry name" value="G65031"/>
</dbReference>
<dbReference type="RefSeq" id="NP_417039.1">
    <property type="nucleotide sequence ID" value="NC_000913.3"/>
</dbReference>
<dbReference type="RefSeq" id="WP_000158547.1">
    <property type="nucleotide sequence ID" value="NZ_STEB01000011.1"/>
</dbReference>
<dbReference type="PDB" id="3NRE">
    <property type="method" value="X-ray"/>
    <property type="resolution" value="1.59 A"/>
    <property type="chains" value="A/B/C/D=1-290"/>
</dbReference>
<dbReference type="PDBsum" id="3NRE"/>
<dbReference type="SMR" id="P76584"/>
<dbReference type="BioGRID" id="4260692">
    <property type="interactions" value="10"/>
</dbReference>
<dbReference type="FunCoup" id="P76584">
    <property type="interactions" value="102"/>
</dbReference>
<dbReference type="IntAct" id="P76584">
    <property type="interactions" value="3"/>
</dbReference>
<dbReference type="STRING" id="511145.b2544"/>
<dbReference type="PaxDb" id="511145-b2544"/>
<dbReference type="EnsemblBacteria" id="AAC75597">
    <property type="protein sequence ID" value="AAC75597"/>
    <property type="gene ID" value="b2544"/>
</dbReference>
<dbReference type="GeneID" id="947017"/>
<dbReference type="KEGG" id="ecj:JW2528"/>
<dbReference type="KEGG" id="eco:b2544"/>
<dbReference type="KEGG" id="ecoc:C3026_14090"/>
<dbReference type="PATRIC" id="fig|511145.12.peg.2645"/>
<dbReference type="EchoBASE" id="EB3236"/>
<dbReference type="eggNOG" id="COG2017">
    <property type="taxonomic scope" value="Bacteria"/>
</dbReference>
<dbReference type="HOGENOM" id="CLU_052486_0_0_6"/>
<dbReference type="InParanoid" id="P76584"/>
<dbReference type="OMA" id="IHGSAWQ"/>
<dbReference type="OrthoDB" id="9808779at2"/>
<dbReference type="PhylomeDB" id="P76584"/>
<dbReference type="BioCyc" id="EcoCyc:G7338-MONOMER"/>
<dbReference type="EvolutionaryTrace" id="P76584"/>
<dbReference type="PRO" id="PR:P76584"/>
<dbReference type="Proteomes" id="UP000000625">
    <property type="component" value="Chromosome"/>
</dbReference>
<dbReference type="GO" id="GO:0004034">
    <property type="term" value="F:aldose 1-epimerase activity"/>
    <property type="evidence" value="ECO:0000318"/>
    <property type="project" value="GO_Central"/>
</dbReference>
<dbReference type="GO" id="GO:0030246">
    <property type="term" value="F:carbohydrate binding"/>
    <property type="evidence" value="ECO:0007669"/>
    <property type="project" value="InterPro"/>
</dbReference>
<dbReference type="GO" id="GO:0006974">
    <property type="term" value="P:DNA damage response"/>
    <property type="evidence" value="ECO:0000270"/>
    <property type="project" value="EcoliWiki"/>
</dbReference>
<dbReference type="GO" id="GO:0033499">
    <property type="term" value="P:galactose catabolic process via UDP-galactose, Leloir pathway"/>
    <property type="evidence" value="ECO:0000318"/>
    <property type="project" value="GO_Central"/>
</dbReference>
<dbReference type="GO" id="GO:0006006">
    <property type="term" value="P:glucose metabolic process"/>
    <property type="evidence" value="ECO:0000318"/>
    <property type="project" value="GO_Central"/>
</dbReference>
<dbReference type="CDD" id="cd09021">
    <property type="entry name" value="Aldose_epim_Ec_YphB"/>
    <property type="match status" value="1"/>
</dbReference>
<dbReference type="FunFam" id="2.70.98.10:FF:000005">
    <property type="entry name" value="Aldose 1-epimerase subfamily"/>
    <property type="match status" value="1"/>
</dbReference>
<dbReference type="Gene3D" id="2.70.98.10">
    <property type="match status" value="1"/>
</dbReference>
<dbReference type="InterPro" id="IPR008183">
    <property type="entry name" value="Aldose_1/G6P_1-epimerase"/>
</dbReference>
<dbReference type="InterPro" id="IPR011013">
    <property type="entry name" value="Gal_mutarotase_sf_dom"/>
</dbReference>
<dbReference type="InterPro" id="IPR014718">
    <property type="entry name" value="GH-type_carb-bd"/>
</dbReference>
<dbReference type="Pfam" id="PF01263">
    <property type="entry name" value="Aldose_epim"/>
    <property type="match status" value="1"/>
</dbReference>
<dbReference type="SUPFAM" id="SSF74650">
    <property type="entry name" value="Galactose mutarotase-like"/>
    <property type="match status" value="1"/>
</dbReference>
<sequence length="290" mass="32716">MTIYTLSHGSLKLDVSDQGGVIEGFWRDTTPLLRPGKKSGVATDASCFPLVPFANRVSGNRFVWQGREYQLQPNVEWDAHYLHGDGWLGEWQCVSHSDDSLCLVYEHRSGVYHYRVSQAFHLTADTLTVTLSVTNQGAETLPFGTGWHPYFPLSPQTRIQAQASGYWLEREQWLAGEFCEQLPQELDFNQPAPLPRQWVNNGFAGWNGQARIEQPQEGYAIIMETTPPAPCYFIFVSDPAFDKGYAFDFFCLEPMSHAPDDHHRPEGGDLIALAPGESTTSEMSLRVEWL</sequence>
<name>YPHB_ECOLI</name>